<feature type="chain" id="PRO_1000086221" description="Nitric oxide reductase FlRd-NAD(+) reductase">
    <location>
        <begin position="1"/>
        <end position="377"/>
    </location>
</feature>
<accession>B1IUW8</accession>
<dbReference type="EC" id="1.18.1.-" evidence="1"/>
<dbReference type="EMBL" id="CP000946">
    <property type="protein sequence ID" value="ACA76670.1"/>
    <property type="molecule type" value="Genomic_DNA"/>
</dbReference>
<dbReference type="RefSeq" id="WP_000064752.1">
    <property type="nucleotide sequence ID" value="NZ_MTFT01000026.1"/>
</dbReference>
<dbReference type="SMR" id="B1IUW8"/>
<dbReference type="KEGG" id="ecl:EcolC_1001"/>
<dbReference type="HOGENOM" id="CLU_003291_4_4_6"/>
<dbReference type="UniPathway" id="UPA00638"/>
<dbReference type="GO" id="GO:0005737">
    <property type="term" value="C:cytoplasm"/>
    <property type="evidence" value="ECO:0007669"/>
    <property type="project" value="UniProtKB-SubCell"/>
</dbReference>
<dbReference type="GO" id="GO:0016731">
    <property type="term" value="F:oxidoreductase activity, acting on iron-sulfur proteins as donors, NAD or NADP as acceptor"/>
    <property type="evidence" value="ECO:0007669"/>
    <property type="project" value="UniProtKB-UniRule"/>
</dbReference>
<dbReference type="FunFam" id="3.30.390.120:FF:000001">
    <property type="entry name" value="Nitric oxide reductase FlRd-NAD(+) reductase"/>
    <property type="match status" value="1"/>
</dbReference>
<dbReference type="FunFam" id="3.50.50.60:FF:000075">
    <property type="entry name" value="Nitric oxide reductase FlRd-NAD(+) reductase"/>
    <property type="match status" value="1"/>
</dbReference>
<dbReference type="Gene3D" id="3.30.390.120">
    <property type="match status" value="1"/>
</dbReference>
<dbReference type="Gene3D" id="3.50.50.60">
    <property type="entry name" value="FAD/NAD(P)-binding domain"/>
    <property type="match status" value="2"/>
</dbReference>
<dbReference type="HAMAP" id="MF_01313">
    <property type="entry name" value="NorW"/>
    <property type="match status" value="1"/>
</dbReference>
<dbReference type="InterPro" id="IPR050260">
    <property type="entry name" value="FAD-bd_OxRdtase"/>
</dbReference>
<dbReference type="InterPro" id="IPR036188">
    <property type="entry name" value="FAD/NAD-bd_sf"/>
</dbReference>
<dbReference type="InterPro" id="IPR023753">
    <property type="entry name" value="FAD/NAD-binding_dom"/>
</dbReference>
<dbReference type="InterPro" id="IPR023961">
    <property type="entry name" value="NO_rdtase_NorW"/>
</dbReference>
<dbReference type="InterPro" id="IPR041364">
    <property type="entry name" value="Rbx-bd"/>
</dbReference>
<dbReference type="NCBIfam" id="NF003437">
    <property type="entry name" value="PRK04965.1"/>
    <property type="match status" value="1"/>
</dbReference>
<dbReference type="PANTHER" id="PTHR43429:SF3">
    <property type="entry name" value="NITRITE REDUCTASE [NAD(P)H]"/>
    <property type="match status" value="1"/>
</dbReference>
<dbReference type="PANTHER" id="PTHR43429">
    <property type="entry name" value="PYRIDINE NUCLEOTIDE-DISULFIDE OXIDOREDUCTASE DOMAIN-CONTAINING"/>
    <property type="match status" value="1"/>
</dbReference>
<dbReference type="Pfam" id="PF07992">
    <property type="entry name" value="Pyr_redox_2"/>
    <property type="match status" value="1"/>
</dbReference>
<dbReference type="Pfam" id="PF18113">
    <property type="entry name" value="Rbx_binding"/>
    <property type="match status" value="1"/>
</dbReference>
<dbReference type="PRINTS" id="PR00368">
    <property type="entry name" value="FADPNR"/>
</dbReference>
<dbReference type="PRINTS" id="PR00411">
    <property type="entry name" value="PNDRDTASEI"/>
</dbReference>
<dbReference type="SUPFAM" id="SSF51905">
    <property type="entry name" value="FAD/NAD(P)-binding domain"/>
    <property type="match status" value="1"/>
</dbReference>
<name>NORW_ECOLC</name>
<evidence type="ECO:0000255" key="1">
    <source>
        <dbReference type="HAMAP-Rule" id="MF_01313"/>
    </source>
</evidence>
<keyword id="KW-0963">Cytoplasm</keyword>
<keyword id="KW-0274">FAD</keyword>
<keyword id="KW-0285">Flavoprotein</keyword>
<keyword id="KW-0520">NAD</keyword>
<keyword id="KW-0560">Oxidoreductase</keyword>
<proteinExistence type="inferred from homology"/>
<organism>
    <name type="scientific">Escherichia coli (strain ATCC 8739 / DSM 1576 / NBRC 3972 / NCIMB 8545 / WDCM 00012 / Crooks)</name>
    <dbReference type="NCBI Taxonomy" id="481805"/>
    <lineage>
        <taxon>Bacteria</taxon>
        <taxon>Pseudomonadati</taxon>
        <taxon>Pseudomonadota</taxon>
        <taxon>Gammaproteobacteria</taxon>
        <taxon>Enterobacterales</taxon>
        <taxon>Enterobacteriaceae</taxon>
        <taxon>Escherichia</taxon>
    </lineage>
</organism>
<sequence>MSNGIVIIGSGFAARQLVKNIRKQDATIPLTLIAADSMDEYNKPDLSHVISQGQRADDLTRQTAGEFAEQFNLHLFPQTWVTDIDAEARVVKSQNNQWQYDKLVLATGASAFVPPVPGRELMLTLNSQQEYRACETQLRDARRVLIVGGGLIGSELAMDFCRAGKAVTLIDNAASILASLMPPEVSSRLQHRLTEMGVHLLLKSQLQGLEKTDSGIQATLDRQRNIEVDAVIAATGLRPETALARRAGLTINRGVCVDSYLQTSNTDIYALGDCAEINGQVLPFLQPIQLSAMVLAKNLLGNNTPLKLPAMLVKIKTPELPLHLAGETQRQDLRWQINTERQGMVARGVDDADQLRAFVVSEDRMKEAFGLLKTLPM</sequence>
<reference key="1">
    <citation type="submission" date="2008-02" db="EMBL/GenBank/DDBJ databases">
        <title>Complete sequence of Escherichia coli C str. ATCC 8739.</title>
        <authorList>
            <person name="Copeland A."/>
            <person name="Lucas S."/>
            <person name="Lapidus A."/>
            <person name="Glavina del Rio T."/>
            <person name="Dalin E."/>
            <person name="Tice H."/>
            <person name="Bruce D."/>
            <person name="Goodwin L."/>
            <person name="Pitluck S."/>
            <person name="Kiss H."/>
            <person name="Brettin T."/>
            <person name="Detter J.C."/>
            <person name="Han C."/>
            <person name="Kuske C.R."/>
            <person name="Schmutz J."/>
            <person name="Larimer F."/>
            <person name="Land M."/>
            <person name="Hauser L."/>
            <person name="Kyrpides N."/>
            <person name="Mikhailova N."/>
            <person name="Ingram L."/>
            <person name="Richardson P."/>
        </authorList>
    </citation>
    <scope>NUCLEOTIDE SEQUENCE [LARGE SCALE GENOMIC DNA]</scope>
    <source>
        <strain>ATCC 8739 / DSM 1576 / NBRC 3972 / NCIMB 8545 / WDCM 00012 / Crooks</strain>
    </source>
</reference>
<comment type="function">
    <text evidence="1">One of at least two accessory proteins for anaerobic nitric oxide (NO) reductase. Reduces the rubredoxin moiety of NO reductase.</text>
</comment>
<comment type="catalytic activity">
    <reaction evidence="1">
        <text>2 reduced [nitric oxide reductase rubredoxin domain] + NAD(+) + H(+) = 2 oxidized [nitric oxide reductase rubredoxin domain] + NADH</text>
        <dbReference type="Rhea" id="RHEA:42960"/>
        <dbReference type="Rhea" id="RHEA-COMP:10304"/>
        <dbReference type="Rhea" id="RHEA-COMP:10305"/>
        <dbReference type="ChEBI" id="CHEBI:15378"/>
        <dbReference type="ChEBI" id="CHEBI:29033"/>
        <dbReference type="ChEBI" id="CHEBI:29034"/>
        <dbReference type="ChEBI" id="CHEBI:57540"/>
        <dbReference type="ChEBI" id="CHEBI:57945"/>
    </reaction>
</comment>
<comment type="cofactor">
    <cofactor evidence="1">
        <name>FAD</name>
        <dbReference type="ChEBI" id="CHEBI:57692"/>
    </cofactor>
</comment>
<comment type="pathway">
    <text evidence="1">Nitrogen metabolism; nitric oxide reduction.</text>
</comment>
<comment type="subcellular location">
    <subcellularLocation>
        <location evidence="1">Cytoplasm</location>
    </subcellularLocation>
</comment>
<comment type="similarity">
    <text evidence="1">Belongs to the FAD-dependent oxidoreductase family.</text>
</comment>
<protein>
    <recommendedName>
        <fullName evidence="1">Nitric oxide reductase FlRd-NAD(+) reductase</fullName>
        <ecNumber evidence="1">1.18.1.-</ecNumber>
    </recommendedName>
    <alternativeName>
        <fullName evidence="1">Flavorubredoxin reductase</fullName>
        <shortName evidence="1">FlRd-reductase</shortName>
        <shortName evidence="1">FlavoRb reductase</shortName>
    </alternativeName>
</protein>
<gene>
    <name evidence="1" type="primary">norW</name>
    <name evidence="1" type="synonym">flrR</name>
    <name type="ordered locus">EcolC_1001</name>
</gene>